<organism>
    <name type="scientific">Enterobacter sp. (strain 638)</name>
    <dbReference type="NCBI Taxonomy" id="399742"/>
    <lineage>
        <taxon>Bacteria</taxon>
        <taxon>Pseudomonadati</taxon>
        <taxon>Pseudomonadota</taxon>
        <taxon>Gammaproteobacteria</taxon>
        <taxon>Enterobacterales</taxon>
        <taxon>Enterobacteriaceae</taxon>
        <taxon>Enterobacter</taxon>
    </lineage>
</organism>
<feature type="chain" id="PRO_1000068818" description="Protein DsrB">
    <location>
        <begin position="1"/>
        <end position="62"/>
    </location>
</feature>
<evidence type="ECO:0000255" key="1">
    <source>
        <dbReference type="HAMAP-Rule" id="MF_01549"/>
    </source>
</evidence>
<name>DSRB_ENT38</name>
<proteinExistence type="inferred from homology"/>
<dbReference type="EMBL" id="CP000653">
    <property type="protein sequence ID" value="ABP61212.1"/>
    <property type="molecule type" value="Genomic_DNA"/>
</dbReference>
<dbReference type="RefSeq" id="WP_015959545.1">
    <property type="nucleotide sequence ID" value="NC_009436.1"/>
</dbReference>
<dbReference type="SMR" id="A4WBY2"/>
<dbReference type="GeneID" id="93305503"/>
<dbReference type="KEGG" id="ent:Ent638_2543"/>
<dbReference type="eggNOG" id="ENOG5032ZW5">
    <property type="taxonomic scope" value="Bacteria"/>
</dbReference>
<dbReference type="HOGENOM" id="CLU_189289_0_0_6"/>
<dbReference type="Proteomes" id="UP000000230">
    <property type="component" value="Chromosome"/>
</dbReference>
<dbReference type="HAMAP" id="MF_01549">
    <property type="entry name" value="DsrB"/>
    <property type="match status" value="1"/>
</dbReference>
<dbReference type="InterPro" id="IPR019717">
    <property type="entry name" value="Dextransucrase_DSRB"/>
</dbReference>
<dbReference type="NCBIfam" id="NF007981">
    <property type="entry name" value="PRK10708.1"/>
    <property type="match status" value="1"/>
</dbReference>
<dbReference type="Pfam" id="PF10781">
    <property type="entry name" value="DSRB"/>
    <property type="match status" value="1"/>
</dbReference>
<protein>
    <recommendedName>
        <fullName evidence="1">Protein DsrB</fullName>
    </recommendedName>
</protein>
<comment type="similarity">
    <text evidence="1">Belongs to the DsrB family.</text>
</comment>
<gene>
    <name evidence="1" type="primary">dsrB</name>
    <name type="ordered locus">Ent638_2543</name>
</gene>
<sequence>MKVNDRVTVKTDGGPRRPGVVLAVEQFSEGVMYLVSLEDYPLGIWFFNEMGHSDGIFVELAE</sequence>
<reference key="1">
    <citation type="journal article" date="2010" name="PLoS Genet.">
        <title>Genome sequence of the plant growth promoting endophytic bacterium Enterobacter sp. 638.</title>
        <authorList>
            <person name="Taghavi S."/>
            <person name="van der Lelie D."/>
            <person name="Hoffman A."/>
            <person name="Zhang Y.B."/>
            <person name="Walla M.D."/>
            <person name="Vangronsveld J."/>
            <person name="Newman L."/>
            <person name="Monchy S."/>
        </authorList>
    </citation>
    <scope>NUCLEOTIDE SEQUENCE [LARGE SCALE GENOMIC DNA]</scope>
    <source>
        <strain>638</strain>
    </source>
</reference>
<accession>A4WBY2</accession>